<accession>A1KSN7</accession>
<comment type="catalytic activity">
    <reaction evidence="1">
        <text>1-(5-phospho-beta-D-ribosyl)-5-[(5-phospho-beta-D-ribosylamino)methylideneamino]imidazole-4-carboxamide = 5-[(5-phospho-1-deoxy-D-ribulos-1-ylimino)methylamino]-1-(5-phospho-beta-D-ribosyl)imidazole-4-carboxamide</text>
        <dbReference type="Rhea" id="RHEA:15469"/>
        <dbReference type="ChEBI" id="CHEBI:58435"/>
        <dbReference type="ChEBI" id="CHEBI:58525"/>
        <dbReference type="EC" id="5.3.1.16"/>
    </reaction>
</comment>
<comment type="pathway">
    <text evidence="1">Amino-acid biosynthesis; L-histidine biosynthesis; L-histidine from 5-phospho-alpha-D-ribose 1-diphosphate: step 4/9.</text>
</comment>
<comment type="subcellular location">
    <subcellularLocation>
        <location evidence="1">Cytoplasm</location>
    </subcellularLocation>
</comment>
<comment type="similarity">
    <text evidence="1">Belongs to the HisA/HisF family.</text>
</comment>
<sequence length="245" mass="25907">MLLIPAIDLKEGRCVRLRQGLMEEATVFSDSPAETALHWFEQGARRLHLVDLNGAFAGVPQNLPAIKDILAAVAKDIPVQLGGGIRDLKTIGQYLDLGLNDVIIGTAAVKNPDFVREACKAFPGRIIVGLDAKDGMAAIDGWATVTGHHVIDLAKRFEDDGVNSIIYTDIGRDGMMSGVNIDATVKLAQAVRIPVIASGGLTGLDDIRALCAAEKHGVAGAITGRAIYEGSIDFAQAQQLADSLD</sequence>
<gene>
    <name evidence="1" type="primary">hisA</name>
    <name type="ordered locus">NMC0573</name>
</gene>
<proteinExistence type="inferred from homology"/>
<reference key="1">
    <citation type="journal article" date="2007" name="PLoS Genet.">
        <title>Meningococcal genetic variation mechanisms viewed through comparative analysis of serogroup C strain FAM18.</title>
        <authorList>
            <person name="Bentley S.D."/>
            <person name="Vernikos G.S."/>
            <person name="Snyder L.A.S."/>
            <person name="Churcher C."/>
            <person name="Arrowsmith C."/>
            <person name="Chillingworth T."/>
            <person name="Cronin A."/>
            <person name="Davis P.H."/>
            <person name="Holroyd N.E."/>
            <person name="Jagels K."/>
            <person name="Maddison M."/>
            <person name="Moule S."/>
            <person name="Rabbinowitsch E."/>
            <person name="Sharp S."/>
            <person name="Unwin L."/>
            <person name="Whitehead S."/>
            <person name="Quail M.A."/>
            <person name="Achtman M."/>
            <person name="Barrell B.G."/>
            <person name="Saunders N.J."/>
            <person name="Parkhill J."/>
        </authorList>
    </citation>
    <scope>NUCLEOTIDE SEQUENCE [LARGE SCALE GENOMIC DNA]</scope>
    <source>
        <strain>ATCC 700532 / DSM 15464 / FAM18</strain>
    </source>
</reference>
<organism>
    <name type="scientific">Neisseria meningitidis serogroup C / serotype 2a (strain ATCC 700532 / DSM 15464 / FAM18)</name>
    <dbReference type="NCBI Taxonomy" id="272831"/>
    <lineage>
        <taxon>Bacteria</taxon>
        <taxon>Pseudomonadati</taxon>
        <taxon>Pseudomonadota</taxon>
        <taxon>Betaproteobacteria</taxon>
        <taxon>Neisseriales</taxon>
        <taxon>Neisseriaceae</taxon>
        <taxon>Neisseria</taxon>
    </lineage>
</organism>
<dbReference type="EC" id="5.3.1.16" evidence="1"/>
<dbReference type="EMBL" id="AM421808">
    <property type="protein sequence ID" value="CAM09867.1"/>
    <property type="molecule type" value="Genomic_DNA"/>
</dbReference>
<dbReference type="RefSeq" id="WP_002214255.1">
    <property type="nucleotide sequence ID" value="NC_008767.1"/>
</dbReference>
<dbReference type="SMR" id="A1KSN7"/>
<dbReference type="KEGG" id="nmc:NMC0573"/>
<dbReference type="HOGENOM" id="CLU_048577_1_1_4"/>
<dbReference type="UniPathway" id="UPA00031">
    <property type="reaction ID" value="UER00009"/>
</dbReference>
<dbReference type="Proteomes" id="UP000002286">
    <property type="component" value="Chromosome"/>
</dbReference>
<dbReference type="GO" id="GO:0005737">
    <property type="term" value="C:cytoplasm"/>
    <property type="evidence" value="ECO:0007669"/>
    <property type="project" value="UniProtKB-SubCell"/>
</dbReference>
<dbReference type="GO" id="GO:0003949">
    <property type="term" value="F:1-(5-phosphoribosyl)-5-[(5-phosphoribosylamino)methylideneamino]imidazole-4-carboxamide isomerase activity"/>
    <property type="evidence" value="ECO:0007669"/>
    <property type="project" value="UniProtKB-UniRule"/>
</dbReference>
<dbReference type="GO" id="GO:0000105">
    <property type="term" value="P:L-histidine biosynthetic process"/>
    <property type="evidence" value="ECO:0007669"/>
    <property type="project" value="UniProtKB-UniRule"/>
</dbReference>
<dbReference type="GO" id="GO:0000162">
    <property type="term" value="P:L-tryptophan biosynthetic process"/>
    <property type="evidence" value="ECO:0007669"/>
    <property type="project" value="TreeGrafter"/>
</dbReference>
<dbReference type="CDD" id="cd04732">
    <property type="entry name" value="HisA"/>
    <property type="match status" value="1"/>
</dbReference>
<dbReference type="FunFam" id="3.20.20.70:FF:000009">
    <property type="entry name" value="1-(5-phosphoribosyl)-5-[(5-phosphoribosylamino)methylideneamino] imidazole-4-carboxamide isomerase"/>
    <property type="match status" value="1"/>
</dbReference>
<dbReference type="Gene3D" id="3.20.20.70">
    <property type="entry name" value="Aldolase class I"/>
    <property type="match status" value="1"/>
</dbReference>
<dbReference type="HAMAP" id="MF_01014">
    <property type="entry name" value="HisA"/>
    <property type="match status" value="1"/>
</dbReference>
<dbReference type="InterPro" id="IPR013785">
    <property type="entry name" value="Aldolase_TIM"/>
</dbReference>
<dbReference type="InterPro" id="IPR006062">
    <property type="entry name" value="His_biosynth"/>
</dbReference>
<dbReference type="InterPro" id="IPR006063">
    <property type="entry name" value="HisA_bact_arch"/>
</dbReference>
<dbReference type="InterPro" id="IPR044524">
    <property type="entry name" value="Isoase_HisA-like"/>
</dbReference>
<dbReference type="InterPro" id="IPR023016">
    <property type="entry name" value="Isoase_HisA-like_bact"/>
</dbReference>
<dbReference type="InterPro" id="IPR011060">
    <property type="entry name" value="RibuloseP-bd_barrel"/>
</dbReference>
<dbReference type="NCBIfam" id="TIGR00007">
    <property type="entry name" value="1-(5-phosphoribosyl)-5-[(5-phosphoribosylamino)methylideneamino]imidazole-4-carboxamide isomerase"/>
    <property type="match status" value="1"/>
</dbReference>
<dbReference type="NCBIfam" id="NF010112">
    <property type="entry name" value="PRK13585.1"/>
    <property type="match status" value="1"/>
</dbReference>
<dbReference type="PANTHER" id="PTHR43090">
    <property type="entry name" value="1-(5-PHOSPHORIBOSYL)-5-[(5-PHOSPHORIBOSYLAMINO)METHYLIDENEAMINO] IMIDAZOLE-4-CARBOXAMIDE ISOMERASE"/>
    <property type="match status" value="1"/>
</dbReference>
<dbReference type="PANTHER" id="PTHR43090:SF2">
    <property type="entry name" value="1-(5-PHOSPHORIBOSYL)-5-[(5-PHOSPHORIBOSYLAMINO)METHYLIDENEAMINO] IMIDAZOLE-4-CARBOXAMIDE ISOMERASE"/>
    <property type="match status" value="1"/>
</dbReference>
<dbReference type="Pfam" id="PF00977">
    <property type="entry name" value="His_biosynth"/>
    <property type="match status" value="1"/>
</dbReference>
<dbReference type="SUPFAM" id="SSF51366">
    <property type="entry name" value="Ribulose-phoshate binding barrel"/>
    <property type="match status" value="1"/>
</dbReference>
<protein>
    <recommendedName>
        <fullName evidence="1">1-(5-phosphoribosyl)-5-[(5-phosphoribosylamino)methylideneamino] imidazole-4-carboxamide isomerase</fullName>
        <ecNumber evidence="1">5.3.1.16</ecNumber>
    </recommendedName>
    <alternativeName>
        <fullName evidence="1">Phosphoribosylformimino-5-aminoimidazole carboxamide ribotide isomerase</fullName>
    </alternativeName>
</protein>
<evidence type="ECO:0000255" key="1">
    <source>
        <dbReference type="HAMAP-Rule" id="MF_01014"/>
    </source>
</evidence>
<name>HIS4_NEIMF</name>
<keyword id="KW-0028">Amino-acid biosynthesis</keyword>
<keyword id="KW-0963">Cytoplasm</keyword>
<keyword id="KW-0368">Histidine biosynthesis</keyword>
<keyword id="KW-0413">Isomerase</keyword>
<feature type="chain" id="PRO_0000290498" description="1-(5-phosphoribosyl)-5-[(5-phosphoribosylamino)methylideneamino] imidazole-4-carboxamide isomerase">
    <location>
        <begin position="1"/>
        <end position="245"/>
    </location>
</feature>
<feature type="active site" description="Proton acceptor" evidence="1">
    <location>
        <position position="8"/>
    </location>
</feature>
<feature type="active site" description="Proton donor" evidence="1">
    <location>
        <position position="131"/>
    </location>
</feature>